<gene>
    <name type="primary">hoxQ</name>
    <name type="ordered locus">PHG008</name>
</gene>
<keyword id="KW-0614">Plasmid</keyword>
<keyword id="KW-1185">Reference proteome</keyword>
<sequence>MNSFPIPVVLLGPGSQAEDETLDYIHMPQGMSVYTPPVLPEPEQIACLTQAQSVLRAILDALDRADPKQPNPRIELWALDEENRQLLKQVLGEGEVSARIEGEYQVYIQEAVFAGVWRVVSTCPDATTDYIEVGAAPEVLRGAARYGANQWSLDVGRVPDGVMNAPSILAEIDDQLLSWHPGKPVHVVNLTLLPMSPQDITFLDETLGAASVTILSRGYGNCRISSTAVPYCWRVVYFNSQDTTILNTVEITDLPEVACAAPEDLRDSHERLTEVLKWVGSI</sequence>
<feature type="chain" id="PRO_0000201415" description="Hydrogenase expression/formation protein HoxQ">
    <location>
        <begin position="1"/>
        <end position="282"/>
    </location>
</feature>
<organism>
    <name type="scientific">Cupriavidus necator (strain ATCC 17699 / DSM 428 / KCTC 22496 / NCIMB 10442 / H16 / Stanier 337)</name>
    <name type="common">Ralstonia eutropha</name>
    <dbReference type="NCBI Taxonomy" id="381666"/>
    <lineage>
        <taxon>Bacteria</taxon>
        <taxon>Pseudomonadati</taxon>
        <taxon>Pseudomonadota</taxon>
        <taxon>Betaproteobacteria</taxon>
        <taxon>Burkholderiales</taxon>
        <taxon>Burkholderiaceae</taxon>
        <taxon>Cupriavidus</taxon>
    </lineage>
</organism>
<proteinExistence type="inferred from homology"/>
<protein>
    <recommendedName>
        <fullName>Hydrogenase expression/formation protein HoxQ</fullName>
    </recommendedName>
</protein>
<evidence type="ECO:0000305" key="1"/>
<dbReference type="EMBL" id="M96433">
    <property type="protein sequence ID" value="AAA16468.1"/>
    <property type="molecule type" value="Unassigned_DNA"/>
</dbReference>
<dbReference type="EMBL" id="AY305378">
    <property type="protein sequence ID" value="AAP85764.1"/>
    <property type="molecule type" value="Genomic_DNA"/>
</dbReference>
<dbReference type="PIR" id="H43255">
    <property type="entry name" value="H43255"/>
</dbReference>
<dbReference type="RefSeq" id="WP_011153933.1">
    <property type="nucleotide sequence ID" value="NC_005241.1"/>
</dbReference>
<dbReference type="SMR" id="P31911"/>
<dbReference type="KEGG" id="reh:PHG008"/>
<dbReference type="PATRIC" id="fig|381666.6.peg.7"/>
<dbReference type="eggNOG" id="COG1773">
    <property type="taxonomic scope" value="Bacteria"/>
</dbReference>
<dbReference type="HOGENOM" id="CLU_079566_0_0_4"/>
<dbReference type="OrthoDB" id="6560677at2"/>
<dbReference type="Proteomes" id="UP000008210">
    <property type="component" value="Plasmid megaplasmid pHG1"/>
</dbReference>
<dbReference type="Gene3D" id="3.30.1370.140">
    <property type="entry name" value="HupH hydrogenase expression protein, C-terminal domain"/>
    <property type="match status" value="2"/>
</dbReference>
<dbReference type="InterPro" id="IPR038527">
    <property type="entry name" value="HupH_C_sf"/>
</dbReference>
<dbReference type="InterPro" id="IPR006894">
    <property type="entry name" value="HupH_Hydgase_express_prot_C"/>
</dbReference>
<dbReference type="Pfam" id="PF04809">
    <property type="entry name" value="HupH_C"/>
    <property type="match status" value="2"/>
</dbReference>
<name>HOXQ_CUPNH</name>
<accession>P31911</accession>
<reference key="1">
    <citation type="journal article" date="1992" name="J. Bacteriol.">
        <title>A gene complex coding for the membrane-bound hydrogenase of Alcaligenes eutrophus H16.</title>
        <authorList>
            <person name="Kortlueke C."/>
            <person name="Horstmann K."/>
            <person name="Schwartz E."/>
            <person name="Rohde M."/>
            <person name="Binsack R."/>
            <person name="Friedrich B."/>
        </authorList>
    </citation>
    <scope>NUCLEOTIDE SEQUENCE [GENOMIC DNA]</scope>
</reference>
<reference key="2">
    <citation type="journal article" date="2003" name="J. Mol. Biol.">
        <title>Complete nucleotide sequence of pHG1: a Ralstonia eutropha H16 megaplasmid encoding key enzymes of H(2)-based lithoautotrophy and anaerobiosis.</title>
        <authorList>
            <person name="Schwartz E."/>
            <person name="Henne A."/>
            <person name="Cramm R."/>
            <person name="Eitinger T."/>
            <person name="Friedrich B."/>
            <person name="Gottschalk G."/>
        </authorList>
    </citation>
    <scope>NUCLEOTIDE SEQUENCE [LARGE SCALE GENOMIC DNA]</scope>
    <source>
        <strain>ATCC 17699 / DSM 428 / KCTC 22496 / NCIMB 10442 / H16 / Stanier 337</strain>
    </source>
</reference>
<comment type="similarity">
    <text evidence="1">Belongs to the HupH/HyaF family.</text>
</comment>
<geneLocation type="plasmid">
    <name>megaplasmid pHG1</name>
</geneLocation>